<keyword id="KW-0150">Chloroplast</keyword>
<keyword id="KW-0472">Membrane</keyword>
<keyword id="KW-0479">Metal-binding</keyword>
<keyword id="KW-0934">Plastid</keyword>
<keyword id="KW-1185">Reference proteome</keyword>
<keyword id="KW-0793">Thylakoid</keyword>
<keyword id="KW-0812">Transmembrane</keyword>
<keyword id="KW-1133">Transmembrane helix</keyword>
<keyword id="KW-0862">Zinc</keyword>
<keyword id="KW-0863">Zinc-finger</keyword>
<accession>Q8GT75</accession>
<accession>Q8GXV3</accession>
<accession>Q9SZT2</accession>
<reference key="1">
    <citation type="submission" date="2000-05" db="EMBL/GenBank/DDBJ databases">
        <title>Characterization of NEP-1 interacting transcription factors.</title>
        <authorList>
            <person name="Hakimi M.A."/>
            <person name="Lagrange T."/>
            <person name="Lerbs-Mache S."/>
        </authorList>
    </citation>
    <scope>NUCLEOTIDE SEQUENCE [MRNA]</scope>
    <source>
        <strain>cv. C24</strain>
    </source>
</reference>
<reference key="2">
    <citation type="journal article" date="1999" name="Nature">
        <title>Sequence and analysis of chromosome 4 of the plant Arabidopsis thaliana.</title>
        <authorList>
            <person name="Mayer K.F.X."/>
            <person name="Schueller C."/>
            <person name="Wambutt R."/>
            <person name="Murphy G."/>
            <person name="Volckaert G."/>
            <person name="Pohl T."/>
            <person name="Duesterhoeft A."/>
            <person name="Stiekema W."/>
            <person name="Entian K.-D."/>
            <person name="Terryn N."/>
            <person name="Harris B."/>
            <person name="Ansorge W."/>
            <person name="Brandt P."/>
            <person name="Grivell L.A."/>
            <person name="Rieger M."/>
            <person name="Weichselgartner M."/>
            <person name="de Simone V."/>
            <person name="Obermaier B."/>
            <person name="Mache R."/>
            <person name="Mueller M."/>
            <person name="Kreis M."/>
            <person name="Delseny M."/>
            <person name="Puigdomenech P."/>
            <person name="Watson M."/>
            <person name="Schmidtheini T."/>
            <person name="Reichert B."/>
            <person name="Portetelle D."/>
            <person name="Perez-Alonso M."/>
            <person name="Boutry M."/>
            <person name="Bancroft I."/>
            <person name="Vos P."/>
            <person name="Hoheisel J."/>
            <person name="Zimmermann W."/>
            <person name="Wedler H."/>
            <person name="Ridley P."/>
            <person name="Langham S.-A."/>
            <person name="McCullagh B."/>
            <person name="Bilham L."/>
            <person name="Robben J."/>
            <person name="van der Schueren J."/>
            <person name="Grymonprez B."/>
            <person name="Chuang Y.-J."/>
            <person name="Vandenbussche F."/>
            <person name="Braeken M."/>
            <person name="Weltjens I."/>
            <person name="Voet M."/>
            <person name="Bastiaens I."/>
            <person name="Aert R."/>
            <person name="Defoor E."/>
            <person name="Weitzenegger T."/>
            <person name="Bothe G."/>
            <person name="Ramsperger U."/>
            <person name="Hilbert H."/>
            <person name="Braun M."/>
            <person name="Holzer E."/>
            <person name="Brandt A."/>
            <person name="Peters S."/>
            <person name="van Staveren M."/>
            <person name="Dirkse W."/>
            <person name="Mooijman P."/>
            <person name="Klein Lankhorst R."/>
            <person name="Rose M."/>
            <person name="Hauf J."/>
            <person name="Koetter P."/>
            <person name="Berneiser S."/>
            <person name="Hempel S."/>
            <person name="Feldpausch M."/>
            <person name="Lamberth S."/>
            <person name="Van den Daele H."/>
            <person name="De Keyser A."/>
            <person name="Buysshaert C."/>
            <person name="Gielen J."/>
            <person name="Villarroel R."/>
            <person name="De Clercq R."/>
            <person name="van Montagu M."/>
            <person name="Rogers J."/>
            <person name="Cronin A."/>
            <person name="Quail M.A."/>
            <person name="Bray-Allen S."/>
            <person name="Clark L."/>
            <person name="Doggett J."/>
            <person name="Hall S."/>
            <person name="Kay M."/>
            <person name="Lennard N."/>
            <person name="McLay K."/>
            <person name="Mayes R."/>
            <person name="Pettett A."/>
            <person name="Rajandream M.A."/>
            <person name="Lyne M."/>
            <person name="Benes V."/>
            <person name="Rechmann S."/>
            <person name="Borkova D."/>
            <person name="Bloecker H."/>
            <person name="Scharfe M."/>
            <person name="Grimm M."/>
            <person name="Loehnert T.-H."/>
            <person name="Dose S."/>
            <person name="de Haan M."/>
            <person name="Maarse A.C."/>
            <person name="Schaefer M."/>
            <person name="Mueller-Auer S."/>
            <person name="Gabel C."/>
            <person name="Fuchs M."/>
            <person name="Fartmann B."/>
            <person name="Granderath K."/>
            <person name="Dauner D."/>
            <person name="Herzl A."/>
            <person name="Neumann S."/>
            <person name="Argiriou A."/>
            <person name="Vitale D."/>
            <person name="Liguori R."/>
            <person name="Piravandi E."/>
            <person name="Massenet O."/>
            <person name="Quigley F."/>
            <person name="Clabauld G."/>
            <person name="Muendlein A."/>
            <person name="Felber R."/>
            <person name="Schnabl S."/>
            <person name="Hiller R."/>
            <person name="Schmidt W."/>
            <person name="Lecharny A."/>
            <person name="Aubourg S."/>
            <person name="Chefdor F."/>
            <person name="Cooke R."/>
            <person name="Berger C."/>
            <person name="Monfort A."/>
            <person name="Casacuberta E."/>
            <person name="Gibbons T."/>
            <person name="Weber N."/>
            <person name="Vandenbol M."/>
            <person name="Bargues M."/>
            <person name="Terol J."/>
            <person name="Torres A."/>
            <person name="Perez-Perez A."/>
            <person name="Purnelle B."/>
            <person name="Bent E."/>
            <person name="Johnson S."/>
            <person name="Tacon D."/>
            <person name="Jesse T."/>
            <person name="Heijnen L."/>
            <person name="Schwarz S."/>
            <person name="Scholler P."/>
            <person name="Heber S."/>
            <person name="Francs P."/>
            <person name="Bielke C."/>
            <person name="Frishman D."/>
            <person name="Haase D."/>
            <person name="Lemcke K."/>
            <person name="Mewes H.-W."/>
            <person name="Stocker S."/>
            <person name="Zaccaria P."/>
            <person name="Bevan M."/>
            <person name="Wilson R.K."/>
            <person name="de la Bastide M."/>
            <person name="Habermann K."/>
            <person name="Parnell L."/>
            <person name="Dedhia N."/>
            <person name="Gnoj L."/>
            <person name="Schutz K."/>
            <person name="Huang E."/>
            <person name="Spiegel L."/>
            <person name="Sekhon M."/>
            <person name="Murray J."/>
            <person name="Sheet P."/>
            <person name="Cordes M."/>
            <person name="Abu-Threideh J."/>
            <person name="Stoneking T."/>
            <person name="Kalicki J."/>
            <person name="Graves T."/>
            <person name="Harmon G."/>
            <person name="Edwards J."/>
            <person name="Latreille P."/>
            <person name="Courtney L."/>
            <person name="Cloud J."/>
            <person name="Abbott A."/>
            <person name="Scott K."/>
            <person name="Johnson D."/>
            <person name="Minx P."/>
            <person name="Bentley D."/>
            <person name="Fulton B."/>
            <person name="Miller N."/>
            <person name="Greco T."/>
            <person name="Kemp K."/>
            <person name="Kramer J."/>
            <person name="Fulton L."/>
            <person name="Mardis E."/>
            <person name="Dante M."/>
            <person name="Pepin K."/>
            <person name="Hillier L.W."/>
            <person name="Nelson J."/>
            <person name="Spieth J."/>
            <person name="Ryan E."/>
            <person name="Andrews S."/>
            <person name="Geisel C."/>
            <person name="Layman D."/>
            <person name="Du H."/>
            <person name="Ali J."/>
            <person name="Berghoff A."/>
            <person name="Jones K."/>
            <person name="Drone K."/>
            <person name="Cotton M."/>
            <person name="Joshu C."/>
            <person name="Antonoiu B."/>
            <person name="Zidanic M."/>
            <person name="Strong C."/>
            <person name="Sun H."/>
            <person name="Lamar B."/>
            <person name="Yordan C."/>
            <person name="Ma P."/>
            <person name="Zhong J."/>
            <person name="Preston R."/>
            <person name="Vil D."/>
            <person name="Shekher M."/>
            <person name="Matero A."/>
            <person name="Shah R."/>
            <person name="Swaby I.K."/>
            <person name="O'Shaughnessy A."/>
            <person name="Rodriguez M."/>
            <person name="Hoffman J."/>
            <person name="Till S."/>
            <person name="Granat S."/>
            <person name="Shohdy N."/>
            <person name="Hasegawa A."/>
            <person name="Hameed A."/>
            <person name="Lodhi M."/>
            <person name="Johnson A."/>
            <person name="Chen E."/>
            <person name="Marra M.A."/>
            <person name="Martienssen R."/>
            <person name="McCombie W.R."/>
        </authorList>
    </citation>
    <scope>NUCLEOTIDE SEQUENCE [LARGE SCALE GENOMIC DNA]</scope>
    <source>
        <strain>cv. Columbia</strain>
    </source>
</reference>
<reference key="3">
    <citation type="journal article" date="2017" name="Plant J.">
        <title>Araport11: a complete reannotation of the Arabidopsis thaliana reference genome.</title>
        <authorList>
            <person name="Cheng C.Y."/>
            <person name="Krishnakumar V."/>
            <person name="Chan A.P."/>
            <person name="Thibaud-Nissen F."/>
            <person name="Schobel S."/>
            <person name="Town C.D."/>
        </authorList>
    </citation>
    <scope>GENOME REANNOTATION</scope>
    <source>
        <strain>cv. Columbia</strain>
    </source>
</reference>
<reference key="4">
    <citation type="journal article" date="2002" name="Science">
        <title>Functional annotation of a full-length Arabidopsis cDNA collection.</title>
        <authorList>
            <person name="Seki M."/>
            <person name="Narusaka M."/>
            <person name="Kamiya A."/>
            <person name="Ishida J."/>
            <person name="Satou M."/>
            <person name="Sakurai T."/>
            <person name="Nakajima M."/>
            <person name="Enju A."/>
            <person name="Akiyama K."/>
            <person name="Oono Y."/>
            <person name="Muramatsu M."/>
            <person name="Hayashizaki Y."/>
            <person name="Kawai J."/>
            <person name="Carninci P."/>
            <person name="Itoh M."/>
            <person name="Ishii Y."/>
            <person name="Arakawa T."/>
            <person name="Shibata K."/>
            <person name="Shinagawa A."/>
            <person name="Shinozaki K."/>
        </authorList>
    </citation>
    <scope>NUCLEOTIDE SEQUENCE [LARGE SCALE MRNA]</scope>
    <source>
        <strain>cv. Columbia</strain>
    </source>
</reference>
<reference key="5">
    <citation type="journal article" date="2003" name="Science">
        <title>Empirical analysis of transcriptional activity in the Arabidopsis genome.</title>
        <authorList>
            <person name="Yamada K."/>
            <person name="Lim J."/>
            <person name="Dale J.M."/>
            <person name="Chen H."/>
            <person name="Shinn P."/>
            <person name="Palm C.J."/>
            <person name="Southwick A.M."/>
            <person name="Wu H.C."/>
            <person name="Kim C.J."/>
            <person name="Nguyen M."/>
            <person name="Pham P.K."/>
            <person name="Cheuk R.F."/>
            <person name="Karlin-Newmann G."/>
            <person name="Liu S.X."/>
            <person name="Lam B."/>
            <person name="Sakano H."/>
            <person name="Wu T."/>
            <person name="Yu G."/>
            <person name="Miranda M."/>
            <person name="Quach H.L."/>
            <person name="Tripp M."/>
            <person name="Chang C.H."/>
            <person name="Lee J.M."/>
            <person name="Toriumi M.J."/>
            <person name="Chan M.M."/>
            <person name="Tang C.C."/>
            <person name="Onodera C.S."/>
            <person name="Deng J.M."/>
            <person name="Akiyama K."/>
            <person name="Ansari Y."/>
            <person name="Arakawa T."/>
            <person name="Banh J."/>
            <person name="Banno F."/>
            <person name="Bowser L."/>
            <person name="Brooks S.Y."/>
            <person name="Carninci P."/>
            <person name="Chao Q."/>
            <person name="Choy N."/>
            <person name="Enju A."/>
            <person name="Goldsmith A.D."/>
            <person name="Gurjal M."/>
            <person name="Hansen N.F."/>
            <person name="Hayashizaki Y."/>
            <person name="Johnson-Hopson C."/>
            <person name="Hsuan V.W."/>
            <person name="Iida K."/>
            <person name="Karnes M."/>
            <person name="Khan S."/>
            <person name="Koesema E."/>
            <person name="Ishida J."/>
            <person name="Jiang P.X."/>
            <person name="Jones T."/>
            <person name="Kawai J."/>
            <person name="Kamiya A."/>
            <person name="Meyers C."/>
            <person name="Nakajima M."/>
            <person name="Narusaka M."/>
            <person name="Seki M."/>
            <person name="Sakurai T."/>
            <person name="Satou M."/>
            <person name="Tamse R."/>
            <person name="Vaysberg M."/>
            <person name="Wallender E.K."/>
            <person name="Wong C."/>
            <person name="Yamamura Y."/>
            <person name="Yuan S."/>
            <person name="Shinozaki K."/>
            <person name="Davis R.W."/>
            <person name="Theologis A."/>
            <person name="Ecker J.R."/>
        </authorList>
    </citation>
    <scope>NUCLEOTIDE SEQUENCE [LARGE SCALE MRNA]</scope>
    <source>
        <strain>cv. Columbia</strain>
    </source>
</reference>
<reference key="6">
    <citation type="journal article" date="2002" name="Genome Biol.">
        <title>Evaluation and classification of RING-finger domains encoded by the Arabidopsis genome.</title>
        <authorList>
            <person name="Kosarev P."/>
            <person name="Mayer K.F.X."/>
            <person name="Hardtke C.S."/>
        </authorList>
    </citation>
    <scope>GENE FAMILY ORGANIZATION</scope>
</reference>
<reference key="7">
    <citation type="journal article" date="2006" name="J. Mol. Evol.">
        <title>The ATL gene family from Arabidopsis thaliana and Oryza sativa comprises a large number of putative ubiquitin ligases of the RING-H2 type.</title>
        <authorList>
            <person name="Serrano M."/>
            <person name="Parra S."/>
            <person name="Alcaraz L.D."/>
            <person name="Guzman P."/>
        </authorList>
    </citation>
    <scope>NOMENCLATURE</scope>
    <scope>GENE FAMILY ORGANIZATION</scope>
</reference>
<reference key="8">
    <citation type="journal article" date="2008" name="Proc. Natl. Acad. Sci. U.S.A.">
        <title>Intraplastidial trafficking of a phage-type RNA polymerase is mediated by a thylakoid RING-H2 protein.</title>
        <authorList>
            <person name="Azevedo J."/>
            <person name="Courtois F."/>
            <person name="Hakimi M.A."/>
            <person name="Demarsy E."/>
            <person name="Lagrange T."/>
            <person name="Alcaraz J.P."/>
            <person name="Jaiswal P."/>
            <person name="Marechal-Drouard L."/>
            <person name="Lerbs-Mache S."/>
        </authorList>
    </citation>
    <scope>INTERACTION WITH RPOT2</scope>
</reference>
<dbReference type="EMBL" id="AJ400897">
    <property type="protein sequence ID" value="CAC81897.1"/>
    <property type="molecule type" value="mRNA"/>
</dbReference>
<dbReference type="EMBL" id="AL031986">
    <property type="protein sequence ID" value="CAA21470.1"/>
    <property type="status" value="ALT_SEQ"/>
    <property type="molecule type" value="Genomic_DNA"/>
</dbReference>
<dbReference type="EMBL" id="AL161588">
    <property type="protein sequence ID" value="CAB81493.1"/>
    <property type="status" value="ALT_SEQ"/>
    <property type="molecule type" value="Genomic_DNA"/>
</dbReference>
<dbReference type="EMBL" id="CP002687">
    <property type="protein sequence ID" value="AEE86579.1"/>
    <property type="molecule type" value="Genomic_DNA"/>
</dbReference>
<dbReference type="EMBL" id="AK118022">
    <property type="protein sequence ID" value="BAC42655.1"/>
    <property type="molecule type" value="mRNA"/>
</dbReference>
<dbReference type="EMBL" id="BT006221">
    <property type="protein sequence ID" value="AAP12870.1"/>
    <property type="molecule type" value="mRNA"/>
</dbReference>
<dbReference type="PIR" id="T04694">
    <property type="entry name" value="T04694"/>
</dbReference>
<dbReference type="RefSeq" id="NP_195309.2">
    <property type="nucleotide sequence ID" value="NM_119750.3"/>
</dbReference>
<dbReference type="SMR" id="Q8GT75"/>
<dbReference type="DIP" id="DIP-40179N"/>
<dbReference type="FunCoup" id="Q8GT75">
    <property type="interactions" value="33"/>
</dbReference>
<dbReference type="IntAct" id="Q8GT75">
    <property type="interactions" value="2"/>
</dbReference>
<dbReference type="PaxDb" id="3702-AT4G35840.1"/>
<dbReference type="EnsemblPlants" id="AT4G35840.1">
    <property type="protein sequence ID" value="AT4G35840.1"/>
    <property type="gene ID" value="AT4G35840"/>
</dbReference>
<dbReference type="GeneID" id="829738"/>
<dbReference type="Gramene" id="AT4G35840.1">
    <property type="protein sequence ID" value="AT4G35840.1"/>
    <property type="gene ID" value="AT4G35840"/>
</dbReference>
<dbReference type="KEGG" id="ath:AT4G35840"/>
<dbReference type="Araport" id="AT4G35840"/>
<dbReference type="TAIR" id="AT4G35840">
    <property type="gene designation" value="ATL26"/>
</dbReference>
<dbReference type="eggNOG" id="KOG0800">
    <property type="taxonomic scope" value="Eukaryota"/>
</dbReference>
<dbReference type="HOGENOM" id="CLU_013137_2_1_1"/>
<dbReference type="InParanoid" id="Q8GT75"/>
<dbReference type="OMA" id="CRFDEAW"/>
<dbReference type="OrthoDB" id="8062037at2759"/>
<dbReference type="PhylomeDB" id="Q8GT75"/>
<dbReference type="PRO" id="PR:Q8GT75"/>
<dbReference type="Proteomes" id="UP000006548">
    <property type="component" value="Chromosome 4"/>
</dbReference>
<dbReference type="ExpressionAtlas" id="Q8GT75">
    <property type="expression patterns" value="baseline and differential"/>
</dbReference>
<dbReference type="GO" id="GO:0009535">
    <property type="term" value="C:chloroplast thylakoid membrane"/>
    <property type="evidence" value="ECO:0007669"/>
    <property type="project" value="UniProtKB-SubCell"/>
</dbReference>
<dbReference type="GO" id="GO:0008270">
    <property type="term" value="F:zinc ion binding"/>
    <property type="evidence" value="ECO:0007669"/>
    <property type="project" value="UniProtKB-KW"/>
</dbReference>
<dbReference type="CDD" id="cd23119">
    <property type="entry name" value="RING-H2_NIPL1-like"/>
    <property type="match status" value="1"/>
</dbReference>
<dbReference type="FunFam" id="3.30.40.10:FF:000505">
    <property type="entry name" value="NEP1-interacting protein-like 1"/>
    <property type="match status" value="1"/>
</dbReference>
<dbReference type="Gene3D" id="3.30.40.10">
    <property type="entry name" value="Zinc/RING finger domain, C3HC4 (zinc finger)"/>
    <property type="match status" value="1"/>
</dbReference>
<dbReference type="InterPro" id="IPR027367">
    <property type="entry name" value="Gly-zipper_YMGG"/>
</dbReference>
<dbReference type="InterPro" id="IPR001841">
    <property type="entry name" value="Znf_RING"/>
</dbReference>
<dbReference type="InterPro" id="IPR013083">
    <property type="entry name" value="Znf_RING/FYVE/PHD"/>
</dbReference>
<dbReference type="PANTHER" id="PTHR46151:SF7">
    <property type="entry name" value="NEP1-INTERACTING PROTEIN 1"/>
    <property type="match status" value="1"/>
</dbReference>
<dbReference type="PANTHER" id="PTHR46151">
    <property type="entry name" value="NEP1-INTERACTING PROTEIN-LIKE 2"/>
    <property type="match status" value="1"/>
</dbReference>
<dbReference type="Pfam" id="PF13441">
    <property type="entry name" value="Gly-zipper_YMGG"/>
    <property type="match status" value="1"/>
</dbReference>
<dbReference type="Pfam" id="PF13639">
    <property type="entry name" value="zf-RING_2"/>
    <property type="match status" value="1"/>
</dbReference>
<dbReference type="SMART" id="SM00184">
    <property type="entry name" value="RING"/>
    <property type="match status" value="1"/>
</dbReference>
<dbReference type="SUPFAM" id="SSF57850">
    <property type="entry name" value="RING/U-box"/>
    <property type="match status" value="1"/>
</dbReference>
<dbReference type="PROSITE" id="PS50089">
    <property type="entry name" value="ZF_RING_2"/>
    <property type="match status" value="1"/>
</dbReference>
<comment type="function">
    <text evidence="1">Intrinsic thylakoid membrane protein that fixes RPOT2 on the stromal side of the thylakoid membrane.</text>
</comment>
<comment type="subunit">
    <text evidence="4">Interacts with RPOT2.</text>
</comment>
<comment type="subcellular location">
    <subcellularLocation>
        <location evidence="1">Plastid</location>
        <location evidence="1">Chloroplast thylakoid membrane</location>
        <topology evidence="1">Multi-pass membrane protein</topology>
    </subcellularLocation>
</comment>
<comment type="similarity">
    <text evidence="5">Belongs to the RING-type zinc finger family. NIP subfamily.</text>
</comment>
<comment type="caution">
    <text evidence="6">Was originally assigned as a member of the E3 ubiquitin-protein ligase ATL subfamily.</text>
</comment>
<comment type="sequence caution" evidence="5">
    <conflict type="erroneous gene model prediction">
        <sequence resource="EMBL-CDS" id="CAA21470"/>
    </conflict>
</comment>
<comment type="sequence caution" evidence="5">
    <conflict type="erroneous gene model prediction">
        <sequence resource="EMBL-CDS" id="CAB81493"/>
    </conflict>
</comment>
<name>NIP1_ARATH</name>
<feature type="chain" id="PRO_0000055806" description="NEP1-interacting protein 1">
    <location>
        <begin position="1"/>
        <end position="236"/>
    </location>
</feature>
<feature type="topological domain" description="Lumenal, thylakoid" evidence="2">
    <location>
        <begin position="1"/>
        <end position="44"/>
    </location>
</feature>
<feature type="transmembrane region" description="Helical" evidence="2">
    <location>
        <begin position="45"/>
        <end position="65"/>
    </location>
</feature>
<feature type="topological domain" description="Stromal" evidence="2">
    <location>
        <begin position="66"/>
        <end position="78"/>
    </location>
</feature>
<feature type="transmembrane region" description="Helical" evidence="2">
    <location>
        <begin position="79"/>
        <end position="99"/>
    </location>
</feature>
<feature type="topological domain" description="Lumenal, thylakoid" evidence="2">
    <location>
        <begin position="100"/>
        <end position="104"/>
    </location>
</feature>
<feature type="transmembrane region" description="Helical" evidence="2">
    <location>
        <begin position="105"/>
        <end position="125"/>
    </location>
</feature>
<feature type="topological domain" description="Stromal" evidence="2">
    <location>
        <begin position="126"/>
        <end position="236"/>
    </location>
</feature>
<feature type="zinc finger region" description="RING-type; atypical" evidence="3">
    <location>
        <begin position="191"/>
        <end position="233"/>
    </location>
</feature>
<feature type="sequence conflict" description="In Ref. 1; CAC81897." evidence="5" ref="1">
    <original>S</original>
    <variation>F</variation>
    <location>
        <position position="185"/>
    </location>
</feature>
<feature type="sequence conflict" description="In Ref. 1; CAC81897." evidence="5" ref="1">
    <original>V</original>
    <variation>G</variation>
    <location>
        <position position="193"/>
    </location>
</feature>
<feature type="sequence conflict" description="In Ref. 1; CAC81897." evidence="5" ref="1">
    <original>H</original>
    <variation>P</variation>
    <location>
        <position position="212"/>
    </location>
</feature>
<evidence type="ECO:0000250" key="1"/>
<evidence type="ECO:0000255" key="2"/>
<evidence type="ECO:0000255" key="3">
    <source>
        <dbReference type="PROSITE-ProRule" id="PRU00175"/>
    </source>
</evidence>
<evidence type="ECO:0000269" key="4">
    <source>
    </source>
</evidence>
<evidence type="ECO:0000305" key="5"/>
<evidence type="ECO:0000305" key="6">
    <source>
    </source>
</evidence>
<protein>
    <recommendedName>
        <fullName>NEP1-interacting protein 1</fullName>
    </recommendedName>
    <alternativeName>
        <fullName>RING-H2 finger protein ATL26</fullName>
    </alternativeName>
</protein>
<sequence>MASSRFQSGFCPISSCPSLENFIERIKDACRFTLSAVLGTILSAVLTFFFALVGTLLGALTGALIGQETESGFIRGAAVGAISGAVFSIEVFESSLVLWKSNESRFGCLLYLIDVIVSLISGRLVRERIGPAMLSAVQSQMGAVDSTFEELSSIFDTGGSKGLTGDLVDKIPKIKITGKNNLDASGNKDSCSVCLQDFQLGETVRSLPHCHHMFHLPCIDNWLFRHGSCPMCRRDL</sequence>
<organism>
    <name type="scientific">Arabidopsis thaliana</name>
    <name type="common">Mouse-ear cress</name>
    <dbReference type="NCBI Taxonomy" id="3702"/>
    <lineage>
        <taxon>Eukaryota</taxon>
        <taxon>Viridiplantae</taxon>
        <taxon>Streptophyta</taxon>
        <taxon>Embryophyta</taxon>
        <taxon>Tracheophyta</taxon>
        <taxon>Spermatophyta</taxon>
        <taxon>Magnoliopsida</taxon>
        <taxon>eudicotyledons</taxon>
        <taxon>Gunneridae</taxon>
        <taxon>Pentapetalae</taxon>
        <taxon>rosids</taxon>
        <taxon>malvids</taxon>
        <taxon>Brassicales</taxon>
        <taxon>Brassicaceae</taxon>
        <taxon>Camelineae</taxon>
        <taxon>Arabidopsis</taxon>
    </lineage>
</organism>
<gene>
    <name type="primary">NIP1</name>
    <name type="synonym">ATL26</name>
    <name type="ordered locus">At4g35840</name>
    <name type="ORF">F4B14.110</name>
</gene>
<proteinExistence type="evidence at protein level"/>